<keyword id="KW-1185">Reference proteome</keyword>
<keyword id="KW-0687">Ribonucleoprotein</keyword>
<keyword id="KW-0689">Ribosomal protein</keyword>
<keyword id="KW-0694">RNA-binding</keyword>
<keyword id="KW-0699">rRNA-binding</keyword>
<name>RS15_LIMF3</name>
<gene>
    <name evidence="1" type="primary">rpsO</name>
    <name type="ordered locus">LAF_0614</name>
</gene>
<accession>B2GBB8</accession>
<organism>
    <name type="scientific">Limosilactobacillus fermentum (strain NBRC 3956 / LMG 18251)</name>
    <name type="common">Lactobacillus fermentum</name>
    <dbReference type="NCBI Taxonomy" id="334390"/>
    <lineage>
        <taxon>Bacteria</taxon>
        <taxon>Bacillati</taxon>
        <taxon>Bacillota</taxon>
        <taxon>Bacilli</taxon>
        <taxon>Lactobacillales</taxon>
        <taxon>Lactobacillaceae</taxon>
        <taxon>Limosilactobacillus</taxon>
    </lineage>
</organism>
<proteinExistence type="inferred from homology"/>
<reference key="1">
    <citation type="journal article" date="2008" name="DNA Res.">
        <title>Comparative genome analysis of Lactobacillus reuteri and Lactobacillus fermentum reveal a genomic island for reuterin and cobalamin production.</title>
        <authorList>
            <person name="Morita H."/>
            <person name="Toh H."/>
            <person name="Fukuda S."/>
            <person name="Horikawa H."/>
            <person name="Oshima K."/>
            <person name="Suzuki T."/>
            <person name="Murakami M."/>
            <person name="Hisamatsu S."/>
            <person name="Kato Y."/>
            <person name="Takizawa T."/>
            <person name="Fukuoka H."/>
            <person name="Yoshimura T."/>
            <person name="Itoh K."/>
            <person name="O'Sullivan D.J."/>
            <person name="McKay L.L."/>
            <person name="Ohno H."/>
            <person name="Kikuchi J."/>
            <person name="Masaoka T."/>
            <person name="Hattori M."/>
        </authorList>
    </citation>
    <scope>NUCLEOTIDE SEQUENCE [LARGE SCALE GENOMIC DNA]</scope>
    <source>
        <strain>NBRC 3956 / LMG 18251</strain>
    </source>
</reference>
<evidence type="ECO:0000255" key="1">
    <source>
        <dbReference type="HAMAP-Rule" id="MF_01343"/>
    </source>
</evidence>
<evidence type="ECO:0000305" key="2"/>
<feature type="chain" id="PRO_1000143132" description="Small ribosomal subunit protein uS15">
    <location>
        <begin position="1"/>
        <end position="89"/>
    </location>
</feature>
<sequence length="89" mass="10372">MAISKEKKNEIIKQFATHEGDTGSTQVQVAVLTADINELNEHLREHKHDYHSQRGLMKKIGHRRNLLAYLRRTDLPAYRELIKALGLRR</sequence>
<comment type="function">
    <text evidence="1">One of the primary rRNA binding proteins, it binds directly to 16S rRNA where it helps nucleate assembly of the platform of the 30S subunit by binding and bridging several RNA helices of the 16S rRNA.</text>
</comment>
<comment type="function">
    <text evidence="1">Forms an intersubunit bridge (bridge B4) with the 23S rRNA of the 50S subunit in the ribosome.</text>
</comment>
<comment type="subunit">
    <text evidence="1">Part of the 30S ribosomal subunit. Forms a bridge to the 50S subunit in the 70S ribosome, contacting the 23S rRNA.</text>
</comment>
<comment type="similarity">
    <text evidence="1">Belongs to the universal ribosomal protein uS15 family.</text>
</comment>
<protein>
    <recommendedName>
        <fullName evidence="1">Small ribosomal subunit protein uS15</fullName>
    </recommendedName>
    <alternativeName>
        <fullName evidence="2">30S ribosomal protein S15</fullName>
    </alternativeName>
</protein>
<dbReference type="EMBL" id="AP008937">
    <property type="protein sequence ID" value="BAG26950.1"/>
    <property type="molecule type" value="Genomic_DNA"/>
</dbReference>
<dbReference type="RefSeq" id="WP_003682069.1">
    <property type="nucleotide sequence ID" value="NC_010610.1"/>
</dbReference>
<dbReference type="SMR" id="B2GBB8"/>
<dbReference type="GeneID" id="83715053"/>
<dbReference type="KEGG" id="lfe:LAF_0614"/>
<dbReference type="eggNOG" id="COG0184">
    <property type="taxonomic scope" value="Bacteria"/>
</dbReference>
<dbReference type="HOGENOM" id="CLU_148518_0_0_9"/>
<dbReference type="Proteomes" id="UP000001697">
    <property type="component" value="Chromosome"/>
</dbReference>
<dbReference type="GO" id="GO:0022627">
    <property type="term" value="C:cytosolic small ribosomal subunit"/>
    <property type="evidence" value="ECO:0007669"/>
    <property type="project" value="TreeGrafter"/>
</dbReference>
<dbReference type="GO" id="GO:0019843">
    <property type="term" value="F:rRNA binding"/>
    <property type="evidence" value="ECO:0007669"/>
    <property type="project" value="UniProtKB-UniRule"/>
</dbReference>
<dbReference type="GO" id="GO:0003735">
    <property type="term" value="F:structural constituent of ribosome"/>
    <property type="evidence" value="ECO:0007669"/>
    <property type="project" value="InterPro"/>
</dbReference>
<dbReference type="GO" id="GO:0006412">
    <property type="term" value="P:translation"/>
    <property type="evidence" value="ECO:0007669"/>
    <property type="project" value="UniProtKB-UniRule"/>
</dbReference>
<dbReference type="CDD" id="cd00353">
    <property type="entry name" value="Ribosomal_S15p_S13e"/>
    <property type="match status" value="1"/>
</dbReference>
<dbReference type="FunFam" id="1.10.287.10:FF:000002">
    <property type="entry name" value="30S ribosomal protein S15"/>
    <property type="match status" value="1"/>
</dbReference>
<dbReference type="Gene3D" id="6.10.250.3130">
    <property type="match status" value="1"/>
</dbReference>
<dbReference type="Gene3D" id="1.10.287.10">
    <property type="entry name" value="S15/NS1, RNA-binding"/>
    <property type="match status" value="1"/>
</dbReference>
<dbReference type="HAMAP" id="MF_01343_B">
    <property type="entry name" value="Ribosomal_uS15_B"/>
    <property type="match status" value="1"/>
</dbReference>
<dbReference type="InterPro" id="IPR000589">
    <property type="entry name" value="Ribosomal_uS15"/>
</dbReference>
<dbReference type="InterPro" id="IPR005290">
    <property type="entry name" value="Ribosomal_uS15_bac-type"/>
</dbReference>
<dbReference type="InterPro" id="IPR009068">
    <property type="entry name" value="uS15_NS1_RNA-bd_sf"/>
</dbReference>
<dbReference type="NCBIfam" id="TIGR00952">
    <property type="entry name" value="S15_bact"/>
    <property type="match status" value="1"/>
</dbReference>
<dbReference type="PANTHER" id="PTHR23321">
    <property type="entry name" value="RIBOSOMAL PROTEIN S15, BACTERIAL AND ORGANELLAR"/>
    <property type="match status" value="1"/>
</dbReference>
<dbReference type="PANTHER" id="PTHR23321:SF26">
    <property type="entry name" value="SMALL RIBOSOMAL SUBUNIT PROTEIN US15M"/>
    <property type="match status" value="1"/>
</dbReference>
<dbReference type="Pfam" id="PF00312">
    <property type="entry name" value="Ribosomal_S15"/>
    <property type="match status" value="1"/>
</dbReference>
<dbReference type="SMART" id="SM01387">
    <property type="entry name" value="Ribosomal_S15"/>
    <property type="match status" value="1"/>
</dbReference>
<dbReference type="SUPFAM" id="SSF47060">
    <property type="entry name" value="S15/NS1 RNA-binding domain"/>
    <property type="match status" value="1"/>
</dbReference>
<dbReference type="PROSITE" id="PS00362">
    <property type="entry name" value="RIBOSOMAL_S15"/>
    <property type="match status" value="1"/>
</dbReference>